<sequence>MDEKKITMNVRNDELSEESKTLISSLPSDKNSTGVNVCKYQGCWYTPPILQGVLNFQKNFKPQDTDIIVASFPKCGTTWLKALTFALVRRSKHPSHDDHHPLLSDNPHVLSPSLEMYLYLCSENPDLTKFSSSSRLFSTHMPSHTLQEGLKGSTCKIVYMSRNVKDTLVSYWHFFCKKQTDDNIISSVEDTFEMFCRGVNFFGPFWDHVLSYWRGSLEDPNHVLFMKFEEMKEEPREQIKRLAEFLGCLFTKEEEESGLVDEIIDLCSLRNLSSLEINKTGKLHSTGRENKTFFRKGEVGDWKNYLTPEMENKIDMIIQEKLQNSGLKF</sequence>
<organism>
    <name type="scientific">Arabidopsis thaliana</name>
    <name type="common">Mouse-ear cress</name>
    <dbReference type="NCBI Taxonomy" id="3702"/>
    <lineage>
        <taxon>Eukaryota</taxon>
        <taxon>Viridiplantae</taxon>
        <taxon>Streptophyta</taxon>
        <taxon>Embryophyta</taxon>
        <taxon>Tracheophyta</taxon>
        <taxon>Spermatophyta</taxon>
        <taxon>Magnoliopsida</taxon>
        <taxon>eudicotyledons</taxon>
        <taxon>Gunneridae</taxon>
        <taxon>Pentapetalae</taxon>
        <taxon>rosids</taxon>
        <taxon>malvids</taxon>
        <taxon>Brassicales</taxon>
        <taxon>Brassicaceae</taxon>
        <taxon>Camelineae</taxon>
        <taxon>Arabidopsis</taxon>
    </lineage>
</organism>
<reference key="1">
    <citation type="journal article" date="2000" name="Nature">
        <title>Sequence and analysis of chromosome 3 of the plant Arabidopsis thaliana.</title>
        <authorList>
            <person name="Salanoubat M."/>
            <person name="Lemcke K."/>
            <person name="Rieger M."/>
            <person name="Ansorge W."/>
            <person name="Unseld M."/>
            <person name="Fartmann B."/>
            <person name="Valle G."/>
            <person name="Bloecker H."/>
            <person name="Perez-Alonso M."/>
            <person name="Obermaier B."/>
            <person name="Delseny M."/>
            <person name="Boutry M."/>
            <person name="Grivell L.A."/>
            <person name="Mache R."/>
            <person name="Puigdomenech P."/>
            <person name="De Simone V."/>
            <person name="Choisne N."/>
            <person name="Artiguenave F."/>
            <person name="Robert C."/>
            <person name="Brottier P."/>
            <person name="Wincker P."/>
            <person name="Cattolico L."/>
            <person name="Weissenbach J."/>
            <person name="Saurin W."/>
            <person name="Quetier F."/>
            <person name="Schaefer M."/>
            <person name="Mueller-Auer S."/>
            <person name="Gabel C."/>
            <person name="Fuchs M."/>
            <person name="Benes V."/>
            <person name="Wurmbach E."/>
            <person name="Drzonek H."/>
            <person name="Erfle H."/>
            <person name="Jordan N."/>
            <person name="Bangert S."/>
            <person name="Wiedelmann R."/>
            <person name="Kranz H."/>
            <person name="Voss H."/>
            <person name="Holland R."/>
            <person name="Brandt P."/>
            <person name="Nyakatura G."/>
            <person name="Vezzi A."/>
            <person name="D'Angelo M."/>
            <person name="Pallavicini A."/>
            <person name="Toppo S."/>
            <person name="Simionati B."/>
            <person name="Conrad A."/>
            <person name="Hornischer K."/>
            <person name="Kauer G."/>
            <person name="Loehnert T.-H."/>
            <person name="Nordsiek G."/>
            <person name="Reichelt J."/>
            <person name="Scharfe M."/>
            <person name="Schoen O."/>
            <person name="Bargues M."/>
            <person name="Terol J."/>
            <person name="Climent J."/>
            <person name="Navarro P."/>
            <person name="Collado C."/>
            <person name="Perez-Perez A."/>
            <person name="Ottenwaelder B."/>
            <person name="Duchemin D."/>
            <person name="Cooke R."/>
            <person name="Laudie M."/>
            <person name="Berger-Llauro C."/>
            <person name="Purnelle B."/>
            <person name="Masuy D."/>
            <person name="de Haan M."/>
            <person name="Maarse A.C."/>
            <person name="Alcaraz J.-P."/>
            <person name="Cottet A."/>
            <person name="Casacuberta E."/>
            <person name="Monfort A."/>
            <person name="Argiriou A."/>
            <person name="Flores M."/>
            <person name="Liguori R."/>
            <person name="Vitale D."/>
            <person name="Mannhaupt G."/>
            <person name="Haase D."/>
            <person name="Schoof H."/>
            <person name="Rudd S."/>
            <person name="Zaccaria P."/>
            <person name="Mewes H.-W."/>
            <person name="Mayer K.F.X."/>
            <person name="Kaul S."/>
            <person name="Town C.D."/>
            <person name="Koo H.L."/>
            <person name="Tallon L.J."/>
            <person name="Jenkins J."/>
            <person name="Rooney T."/>
            <person name="Rizzo M."/>
            <person name="Walts A."/>
            <person name="Utterback T."/>
            <person name="Fujii C.Y."/>
            <person name="Shea T.P."/>
            <person name="Creasy T.H."/>
            <person name="Haas B."/>
            <person name="Maiti R."/>
            <person name="Wu D."/>
            <person name="Peterson J."/>
            <person name="Van Aken S."/>
            <person name="Pai G."/>
            <person name="Militscher J."/>
            <person name="Sellers P."/>
            <person name="Gill J.E."/>
            <person name="Feldblyum T.V."/>
            <person name="Preuss D."/>
            <person name="Lin X."/>
            <person name="Nierman W.C."/>
            <person name="Salzberg S.L."/>
            <person name="White O."/>
            <person name="Venter J.C."/>
            <person name="Fraser C.M."/>
            <person name="Kaneko T."/>
            <person name="Nakamura Y."/>
            <person name="Sato S."/>
            <person name="Kato T."/>
            <person name="Asamizu E."/>
            <person name="Sasamoto S."/>
            <person name="Kimura T."/>
            <person name="Idesawa K."/>
            <person name="Kawashima K."/>
            <person name="Kishida Y."/>
            <person name="Kiyokawa C."/>
            <person name="Kohara M."/>
            <person name="Matsumoto M."/>
            <person name="Matsuno A."/>
            <person name="Muraki A."/>
            <person name="Nakayama S."/>
            <person name="Nakazaki N."/>
            <person name="Shinpo S."/>
            <person name="Takeuchi C."/>
            <person name="Wada T."/>
            <person name="Watanabe A."/>
            <person name="Yamada M."/>
            <person name="Yasuda M."/>
            <person name="Tabata S."/>
        </authorList>
    </citation>
    <scope>NUCLEOTIDE SEQUENCE [LARGE SCALE GENOMIC DNA]</scope>
    <source>
        <strain>cv. Columbia</strain>
    </source>
</reference>
<reference key="2">
    <citation type="journal article" date="2017" name="Plant J.">
        <title>Araport11: a complete reannotation of the Arabidopsis thaliana reference genome.</title>
        <authorList>
            <person name="Cheng C.Y."/>
            <person name="Krishnakumar V."/>
            <person name="Chan A.P."/>
            <person name="Thibaud-Nissen F."/>
            <person name="Schobel S."/>
            <person name="Town C.D."/>
        </authorList>
    </citation>
    <scope>GENOME REANNOTATION</scope>
    <source>
        <strain>cv. Columbia</strain>
    </source>
</reference>
<reference key="3">
    <citation type="submission" date="2004-09" db="EMBL/GenBank/DDBJ databases">
        <title>Arabidopsis ORF clones.</title>
        <authorList>
            <person name="Cheuk R."/>
            <person name="Chen H."/>
            <person name="Kim C.J."/>
            <person name="Shinn P."/>
            <person name="Ecker J.R."/>
        </authorList>
    </citation>
    <scope>NUCLEOTIDE SEQUENCE [LARGE SCALE MRNA]</scope>
</reference>
<reference key="4">
    <citation type="journal article" date="2004" name="J. Exp. Bot.">
        <title>The multi-protein family of Arabidopsis sulphotransferases and their relatives in other plant species.</title>
        <authorList>
            <person name="Klein M."/>
            <person name="Papenbrock J."/>
        </authorList>
    </citation>
    <scope>GENE FAMILY</scope>
    <scope>NOMENCLATURE</scope>
</reference>
<reference key="5">
    <citation type="journal article" date="2006" name="Plant Physiol. Biochem.">
        <title>Biochemical and molecular characterization of flavonoid 7-sulfotransferase from Arabidopsis thaliana.</title>
        <authorList>
            <person name="Gidda S.K."/>
            <person name="Varin L."/>
        </authorList>
    </citation>
    <scope>IDENTIFICATION</scope>
    <scope>NOMENCLATURE</scope>
    <source>
        <strain>cv. Columbia</strain>
    </source>
</reference>
<keyword id="KW-0963">Cytoplasm</keyword>
<keyword id="KW-1185">Reference proteome</keyword>
<keyword id="KW-0808">Transferase</keyword>
<evidence type="ECO:0000250" key="1"/>
<evidence type="ECO:0000305" key="2"/>
<protein>
    <recommendedName>
        <fullName>Cytosolic sulfotransferase 6</fullName>
        <shortName>AtSOT6</shortName>
        <ecNumber>2.8.2.-</ecNumber>
    </recommendedName>
    <alternativeName>
        <fullName>sulfotransferase 3b</fullName>
        <shortName>AtST3b</shortName>
    </alternativeName>
</protein>
<feature type="chain" id="PRO_0000417054" description="Cytosolic sulfotransferase 6">
    <location>
        <begin position="1"/>
        <end position="329"/>
    </location>
</feature>
<feature type="active site" description="Proton acceptor" evidence="1">
    <location>
        <position position="140"/>
    </location>
</feature>
<feature type="binding site" evidence="1">
    <location>
        <begin position="74"/>
        <end position="79"/>
    </location>
    <ligand>
        <name>3'-phosphoadenylyl sulfate</name>
        <dbReference type="ChEBI" id="CHEBI:58339"/>
    </ligand>
</feature>
<feature type="binding site" evidence="1">
    <location>
        <position position="162"/>
    </location>
    <ligand>
        <name>3'-phosphoadenylyl sulfate</name>
        <dbReference type="ChEBI" id="CHEBI:58339"/>
    </ligand>
</feature>
<feature type="binding site" evidence="1">
    <location>
        <position position="170"/>
    </location>
    <ligand>
        <name>3'-phosphoadenylyl sulfate</name>
        <dbReference type="ChEBI" id="CHEBI:58339"/>
    </ligand>
</feature>
<feature type="binding site" evidence="1">
    <location>
        <begin position="295"/>
        <end position="297"/>
    </location>
    <ligand>
        <name>3'-phosphoadenylyl sulfate</name>
        <dbReference type="ChEBI" id="CHEBI:58339"/>
    </ligand>
</feature>
<dbReference type="EC" id="2.8.2.-"/>
<dbReference type="EMBL" id="AL138649">
    <property type="protein sequence ID" value="CAB72146.1"/>
    <property type="molecule type" value="Genomic_DNA"/>
</dbReference>
<dbReference type="EMBL" id="CP002686">
    <property type="protein sequence ID" value="AEE77989.1"/>
    <property type="molecule type" value="Genomic_DNA"/>
</dbReference>
<dbReference type="EMBL" id="BT014993">
    <property type="protein sequence ID" value="AAT70444.1"/>
    <property type="molecule type" value="mRNA"/>
</dbReference>
<dbReference type="EMBL" id="BT015730">
    <property type="protein sequence ID" value="AAU45228.1"/>
    <property type="molecule type" value="mRNA"/>
</dbReference>
<dbReference type="PIR" id="T47448">
    <property type="entry name" value="T47448"/>
</dbReference>
<dbReference type="RefSeq" id="NP_190094.1">
    <property type="nucleotide sequence ID" value="NM_114377.3"/>
</dbReference>
<dbReference type="SMR" id="Q9M1V1"/>
<dbReference type="BioGRID" id="8963">
    <property type="interactions" value="1"/>
</dbReference>
<dbReference type="FunCoup" id="Q9M1V1">
    <property type="interactions" value="39"/>
</dbReference>
<dbReference type="STRING" id="3702.Q9M1V1"/>
<dbReference type="iPTMnet" id="Q9M1V1"/>
<dbReference type="PaxDb" id="3702-AT3G45080.1"/>
<dbReference type="ProteomicsDB" id="232630"/>
<dbReference type="EnsemblPlants" id="AT3G45080.1">
    <property type="protein sequence ID" value="AT3G45080.1"/>
    <property type="gene ID" value="AT3G45080"/>
</dbReference>
<dbReference type="GeneID" id="823643"/>
<dbReference type="Gramene" id="AT3G45080.1">
    <property type="protein sequence ID" value="AT3G45080.1"/>
    <property type="gene ID" value="AT3G45080"/>
</dbReference>
<dbReference type="KEGG" id="ath:AT3G45080"/>
<dbReference type="Araport" id="AT3G45080"/>
<dbReference type="TAIR" id="AT3G45080"/>
<dbReference type="eggNOG" id="KOG1584">
    <property type="taxonomic scope" value="Eukaryota"/>
</dbReference>
<dbReference type="HOGENOM" id="CLU_027239_0_3_1"/>
<dbReference type="InParanoid" id="Q9M1V1"/>
<dbReference type="OMA" id="IDIYHES"/>
<dbReference type="PhylomeDB" id="Q9M1V1"/>
<dbReference type="BioCyc" id="ARA:AT3G45080-MONOMER"/>
<dbReference type="PRO" id="PR:Q9M1V1"/>
<dbReference type="Proteomes" id="UP000006548">
    <property type="component" value="Chromosome 3"/>
</dbReference>
<dbReference type="ExpressionAtlas" id="Q9M1V1">
    <property type="expression patterns" value="baseline and differential"/>
</dbReference>
<dbReference type="GO" id="GO:0005737">
    <property type="term" value="C:cytoplasm"/>
    <property type="evidence" value="ECO:0007669"/>
    <property type="project" value="UniProtKB-SubCell"/>
</dbReference>
<dbReference type="GO" id="GO:0008146">
    <property type="term" value="F:sulfotransferase activity"/>
    <property type="evidence" value="ECO:0007669"/>
    <property type="project" value="InterPro"/>
</dbReference>
<dbReference type="FunFam" id="3.40.50.300:FF:001258">
    <property type="entry name" value="Sulfotransferase"/>
    <property type="match status" value="1"/>
</dbReference>
<dbReference type="Gene3D" id="3.40.50.300">
    <property type="entry name" value="P-loop containing nucleotide triphosphate hydrolases"/>
    <property type="match status" value="1"/>
</dbReference>
<dbReference type="InterPro" id="IPR027417">
    <property type="entry name" value="P-loop_NTPase"/>
</dbReference>
<dbReference type="InterPro" id="IPR000863">
    <property type="entry name" value="Sulfotransferase_dom"/>
</dbReference>
<dbReference type="PANTHER" id="PTHR11783">
    <property type="entry name" value="SULFOTRANSFERASE SULT"/>
    <property type="match status" value="1"/>
</dbReference>
<dbReference type="Pfam" id="PF00685">
    <property type="entry name" value="Sulfotransfer_1"/>
    <property type="match status" value="1"/>
</dbReference>
<dbReference type="SUPFAM" id="SSF52540">
    <property type="entry name" value="P-loop containing nucleoside triphosphate hydrolases"/>
    <property type="match status" value="1"/>
</dbReference>
<proteinExistence type="evidence at transcript level"/>
<comment type="function">
    <text evidence="1">Sulfotransferase that utilizes 3'-phospho-5'-adenylyl sulfate (PAPS) as sulfonate donor.</text>
</comment>
<comment type="subcellular location">
    <subcellularLocation>
        <location evidence="1">Cytoplasm</location>
    </subcellularLocation>
</comment>
<comment type="similarity">
    <text evidence="2">Belongs to the sulfotransferase 1 family.</text>
</comment>
<gene>
    <name type="primary">SOT6</name>
    <name type="synonym">ST3B</name>
    <name type="ordered locus">At3g45080</name>
    <name type="ORF">T14D3.20</name>
</gene>
<accession>Q9M1V1</accession>
<name>SOT6_ARATH</name>